<proteinExistence type="inferred from homology"/>
<organism>
    <name type="scientific">Vanderwaltozyma polyspora (strain ATCC 22028 / DSM 70294 / BCRC 21397 / CBS 2163 / NBRC 10782 / NRRL Y-8283 / UCD 57-17)</name>
    <name type="common">Kluyveromyces polysporus</name>
    <dbReference type="NCBI Taxonomy" id="436907"/>
    <lineage>
        <taxon>Eukaryota</taxon>
        <taxon>Fungi</taxon>
        <taxon>Dikarya</taxon>
        <taxon>Ascomycota</taxon>
        <taxon>Saccharomycotina</taxon>
        <taxon>Saccharomycetes</taxon>
        <taxon>Saccharomycetales</taxon>
        <taxon>Saccharomycetaceae</taxon>
        <taxon>Vanderwaltozyma</taxon>
    </lineage>
</organism>
<dbReference type="EMBL" id="DS480395">
    <property type="protein sequence ID" value="EDO17990.1"/>
    <property type="molecule type" value="Genomic_DNA"/>
</dbReference>
<dbReference type="RefSeq" id="XP_001645848.1">
    <property type="nucleotide sequence ID" value="XM_001645798.1"/>
</dbReference>
<dbReference type="SMR" id="A7TIC4"/>
<dbReference type="FunCoup" id="A7TIC4">
    <property type="interactions" value="41"/>
</dbReference>
<dbReference type="STRING" id="436907.A7TIC4"/>
<dbReference type="GeneID" id="5546254"/>
<dbReference type="KEGG" id="vpo:Kpol_1054p37"/>
<dbReference type="eggNOG" id="ENOG502S7IA">
    <property type="taxonomic scope" value="Eukaryota"/>
</dbReference>
<dbReference type="HOGENOM" id="CLU_100293_0_0_1"/>
<dbReference type="InParanoid" id="A7TIC4"/>
<dbReference type="OMA" id="NSHIGPN"/>
<dbReference type="OrthoDB" id="5578174at2759"/>
<dbReference type="PhylomeDB" id="A7TIC4"/>
<dbReference type="Proteomes" id="UP000000267">
    <property type="component" value="Unassembled WGS sequence"/>
</dbReference>
<dbReference type="GO" id="GO:0005739">
    <property type="term" value="C:mitochondrion"/>
    <property type="evidence" value="ECO:0007669"/>
    <property type="project" value="UniProtKB-SubCell"/>
</dbReference>
<dbReference type="GO" id="GO:0005634">
    <property type="term" value="C:nucleus"/>
    <property type="evidence" value="ECO:0007669"/>
    <property type="project" value="TreeGrafter"/>
</dbReference>
<dbReference type="InterPro" id="IPR010487">
    <property type="entry name" value="NGRN/Rrg9"/>
</dbReference>
<dbReference type="PANTHER" id="PTHR13475">
    <property type="entry name" value="NEUGRIN"/>
    <property type="match status" value="1"/>
</dbReference>
<dbReference type="PANTHER" id="PTHR13475:SF3">
    <property type="entry name" value="NEUGRIN"/>
    <property type="match status" value="1"/>
</dbReference>
<dbReference type="Pfam" id="PF06413">
    <property type="entry name" value="Neugrin"/>
    <property type="match status" value="1"/>
</dbReference>
<comment type="function">
    <text evidence="1">Required for respiratory activity and maintenance and expression of the mitochondrial genome.</text>
</comment>
<comment type="subcellular location">
    <subcellularLocation>
        <location evidence="1">Mitochondrion</location>
    </subcellularLocation>
</comment>
<comment type="similarity">
    <text evidence="3">Belongs to the RRG9 family.</text>
</comment>
<name>RRG9_VANPO</name>
<keyword id="KW-0496">Mitochondrion</keyword>
<keyword id="KW-1185">Reference proteome</keyword>
<keyword id="KW-0809">Transit peptide</keyword>
<reference key="1">
    <citation type="journal article" date="2007" name="Proc. Natl. Acad. Sci. U.S.A.">
        <title>Independent sorting-out of thousands of duplicated gene pairs in two yeast species descended from a whole-genome duplication.</title>
        <authorList>
            <person name="Scannell D.R."/>
            <person name="Frank A.C."/>
            <person name="Conant G.C."/>
            <person name="Byrne K.P."/>
            <person name="Woolfit M."/>
            <person name="Wolfe K.H."/>
        </authorList>
    </citation>
    <scope>NUCLEOTIDE SEQUENCE [LARGE SCALE GENOMIC DNA]</scope>
    <source>
        <strain>ATCC 22028 / DSM 70294 / BCRC 21397 / CBS 2163 / NBRC 10782 / NRRL Y-8283 / UCD 57-17</strain>
    </source>
</reference>
<protein>
    <recommendedName>
        <fullName>Required for respiratory growth protein 9, mitochondrial</fullName>
    </recommendedName>
</protein>
<sequence length="209" mass="24034">MFLAVKIPIRRFHVSYKVFESSKKSAKEVIELINSSSLSNKETFDSSSNVPEWKRQKLALKSKFKGEKWNPKKKLSRVEMDTVRLLKDKIPSLTASDLGDKFKVSPEAIRRILKSKWQPSAEEISKIEDRWKKRGIRVEEIMKKRKIWNSHIGPNGVTNTLVIGSGNNSPIHTIKKMVSNNSDDKTNTSKMDLARKKSKLELLKKTLNQ</sequence>
<evidence type="ECO:0000250" key="1"/>
<evidence type="ECO:0000255" key="2"/>
<evidence type="ECO:0000305" key="3"/>
<gene>
    <name type="primary">RRG9</name>
    <name type="ORF">Kpol_1054p37</name>
</gene>
<feature type="transit peptide" description="Mitochondrion" evidence="2">
    <location>
        <begin position="1"/>
        <end position="19"/>
    </location>
</feature>
<feature type="chain" id="PRO_0000407969" description="Required for respiratory growth protein 9, mitochondrial">
    <location>
        <begin position="20"/>
        <end position="209"/>
    </location>
</feature>
<accession>A7TIC4</accession>